<evidence type="ECO:0000250" key="1"/>
<evidence type="ECO:0000250" key="2">
    <source>
        <dbReference type="UniProtKB" id="P11275"/>
    </source>
</evidence>
<evidence type="ECO:0000250" key="3">
    <source>
        <dbReference type="UniProtKB" id="P11798"/>
    </source>
</evidence>
<evidence type="ECO:0000255" key="4">
    <source>
        <dbReference type="PROSITE-ProRule" id="PRU00159"/>
    </source>
</evidence>
<evidence type="ECO:0000255" key="5">
    <source>
        <dbReference type="PROSITE-ProRule" id="PRU10027"/>
    </source>
</evidence>
<evidence type="ECO:0000256" key="6">
    <source>
        <dbReference type="SAM" id="MobiDB-lite"/>
    </source>
</evidence>
<evidence type="ECO:0000269" key="7">
    <source>
    </source>
</evidence>
<evidence type="ECO:0000269" key="8">
    <source>
    </source>
</evidence>
<evidence type="ECO:0000269" key="9">
    <source>
    </source>
</evidence>
<evidence type="ECO:0000269" key="10">
    <source>
    </source>
</evidence>
<evidence type="ECO:0000269" key="11">
    <source>
    </source>
</evidence>
<evidence type="ECO:0000269" key="12">
    <source>
    </source>
</evidence>
<evidence type="ECO:0000269" key="13">
    <source>
    </source>
</evidence>
<evidence type="ECO:0000269" key="14">
    <source>
    </source>
</evidence>
<evidence type="ECO:0000303" key="15">
    <source ref="1"/>
</evidence>
<evidence type="ECO:0000305" key="16"/>
<evidence type="ECO:0007829" key="17">
    <source>
        <dbReference type="PDB" id="2VZ6"/>
    </source>
</evidence>
<evidence type="ECO:0007829" key="18">
    <source>
        <dbReference type="PDB" id="5IG3"/>
    </source>
</evidence>
<evidence type="ECO:0007829" key="19">
    <source>
        <dbReference type="PDB" id="6OF8"/>
    </source>
</evidence>
<evidence type="ECO:0007829" key="20">
    <source>
        <dbReference type="PDB" id="6X5G"/>
    </source>
</evidence>
<accession>Q9UQM7</accession>
<accession>Q9UL21</accession>
<accession>Q9Y2H4</accession>
<accession>Q9Y352</accession>
<protein>
    <recommendedName>
        <fullName>Calcium/calmodulin-dependent protein kinase type II subunit alpha</fullName>
        <shortName>CaM kinase II subunit alpha</shortName>
        <shortName>CaMK-II subunit alpha</shortName>
        <ecNumber evidence="9">2.7.11.17</ecNumber>
    </recommendedName>
</protein>
<proteinExistence type="evidence at protein level"/>
<name>KCC2A_HUMAN</name>
<comment type="function">
    <text evidence="2 3 7 9 11 12">Calcium/calmodulin-dependent protein kinase that functions autonomously after Ca(2+)/calmodulin-binding and autophosphorylation, and is involved in various processes, such as synaptic plasticity, neurotransmitter release and long-term potentiation (PubMed:14722083). Member of the NMDAR signaling complex in excitatory synapses, it regulates NMDAR-dependent potentiation of the AMPAR and therefore excitatory synaptic transmission (By similarity). Regulates dendritic spine development (PubMed:28130356). Also regulates the migration of developing neurons (PubMed:29100089). Phosphorylates the transcription factor FOXO3 to activate its transcriptional activity (PubMed:23805378). Phosphorylates the transcription factor ETS1 in response to calcium signaling, thereby decreasing ETS1 affinity for DNA (By similarity). In response to interferon-gamma (IFN-gamma) stimulation, catalyzes phosphorylation of STAT1, stimulating the JAK-STAT signaling pathway (PubMed:11972023). In response to interferon-beta (IFN-beta) stimulation, stimulates the JAK-STAT signaling pathway (PubMed:35568036). Acts as a negative regulator of 2-arachidonoylglycerol (2-AG)-mediated synaptic signaling via modulation of DAGLA activity (By similarity).</text>
</comment>
<comment type="catalytic activity">
    <reaction evidence="9">
        <text>L-seryl-[protein] + ATP = O-phospho-L-seryl-[protein] + ADP + H(+)</text>
        <dbReference type="Rhea" id="RHEA:17989"/>
        <dbReference type="Rhea" id="RHEA-COMP:9863"/>
        <dbReference type="Rhea" id="RHEA-COMP:11604"/>
        <dbReference type="ChEBI" id="CHEBI:15378"/>
        <dbReference type="ChEBI" id="CHEBI:29999"/>
        <dbReference type="ChEBI" id="CHEBI:30616"/>
        <dbReference type="ChEBI" id="CHEBI:83421"/>
        <dbReference type="ChEBI" id="CHEBI:456216"/>
        <dbReference type="EC" id="2.7.11.17"/>
    </reaction>
</comment>
<comment type="catalytic activity">
    <reaction evidence="9">
        <text>L-threonyl-[protein] + ATP = O-phospho-L-threonyl-[protein] + ADP + H(+)</text>
        <dbReference type="Rhea" id="RHEA:46608"/>
        <dbReference type="Rhea" id="RHEA-COMP:11060"/>
        <dbReference type="Rhea" id="RHEA-COMP:11605"/>
        <dbReference type="ChEBI" id="CHEBI:15378"/>
        <dbReference type="ChEBI" id="CHEBI:30013"/>
        <dbReference type="ChEBI" id="CHEBI:30616"/>
        <dbReference type="ChEBI" id="CHEBI:61977"/>
        <dbReference type="ChEBI" id="CHEBI:456216"/>
        <dbReference type="EC" id="2.7.11.17"/>
    </reaction>
</comment>
<comment type="cofactor">
    <cofactor evidence="9">
        <name>Mg(2+)</name>
        <dbReference type="ChEBI" id="CHEBI:18420"/>
    </cofactor>
</comment>
<comment type="activity regulation">
    <text evidence="8">Activated by Ca(2+)/calmodulin. Binding of calmodulin results in conformational change that relieves intrasteric autoinhibition and allows autophosphorylation of Thr-286 which turns the kinase in a constitutively active form and confers to the kinase a Ca(2+)-independent activity.</text>
</comment>
<comment type="subunit">
    <text evidence="2 3 8 11 14">There are 4 genes encoding calcium/calmodulin-dependent protein kinase type II chains: CAMK2A, CAMK2B, CAMK2G and CAMK2D. The corresponding proteins assemble into homo- or heteromultimeric holoenzymes composed of 12 subunits with two hexameric rings stacked one on top of the other (PubMed:14722083, PubMed:29784083). Interacts with BAALC. Interacts with MPDZ. Interacts with SYN1. Interacts with CAMK2N2. Interacts with SYNGAP1. Interacts with SYNPO2 (By similarity). Interacts with SHANK3 (PubMed:28130356). Interacts with GRIN2B (PubMed:28130356). Interacts with CACNB2 (PubMed:28130356). Interacts with LRRC7 (PubMed:28130356). Interacts with GRM5 (PubMed:28130356). Interacts with DAGLA (via C-terminal); this interaction is enhanced by autophosphorylation of CAMK2A at Thr-286 (By similarity). Interacts with CAMK2N1; this interaction requires CAMK2A activation by Ca(2+) (By similarity).</text>
</comment>
<comment type="interaction">
    <interactant intactId="EBI-1383687">
        <id>Q9UQM7</id>
    </interactant>
    <interactant intactId="EBI-367510">
        <id>P68133</id>
        <label>ACTA1</label>
    </interactant>
    <organismsDiffer>false</organismsDiffer>
    <experiments>3</experiments>
</comment>
<comment type="interaction">
    <interactant intactId="EBI-1383687">
        <id>Q9UQM7</id>
    </interactant>
    <interactant intactId="EBI-296087">
        <id>P31749</id>
        <label>AKT1</label>
    </interactant>
    <organismsDiffer>false</organismsDiffer>
    <experiments>3</experiments>
</comment>
<comment type="interaction">
    <interactant intactId="EBI-1383687">
        <id>Q9UQM7</id>
    </interactant>
    <interactant intactId="EBI-21535880">
        <id>Q92870-2</id>
        <label>APBB2</label>
    </interactant>
    <organismsDiffer>false</organismsDiffer>
    <experiments>3</experiments>
</comment>
<comment type="interaction">
    <interactant intactId="EBI-1383687">
        <id>Q9UQM7</id>
    </interactant>
    <interactant intactId="EBI-77613">
        <id>P05067</id>
        <label>APP</label>
    </interactant>
    <organismsDiffer>false</organismsDiffer>
    <experiments>3</experiments>
</comment>
<comment type="interaction">
    <interactant intactId="EBI-1383687">
        <id>Q9UQM7</id>
    </interactant>
    <interactant intactId="EBI-948603">
        <id>Q03989</id>
        <label>ARID5A</label>
    </interactant>
    <organismsDiffer>false</organismsDiffer>
    <experiments>3</experiments>
</comment>
<comment type="interaction">
    <interactant intactId="EBI-1383687">
        <id>Q9UQM7</id>
    </interactant>
    <interactant intactId="EBI-948169">
        <id>P13637</id>
        <label>ATP1A3</label>
    </interactant>
    <organismsDiffer>false</organismsDiffer>
    <experiments>3</experiments>
</comment>
<comment type="interaction">
    <interactant intactId="EBI-1383687">
        <id>Q9UQM7</id>
    </interactant>
    <interactant intactId="EBI-12275524">
        <id>P23560-2</id>
        <label>BDNF</label>
    </interactant>
    <organismsDiffer>false</organismsDiffer>
    <experiments>3</experiments>
</comment>
<comment type="interaction">
    <interactant intactId="EBI-1383687">
        <id>Q9UQM7</id>
    </interactant>
    <interactant intactId="EBI-946029">
        <id>Q6P1W5</id>
        <label>C1orf94</label>
    </interactant>
    <organismsDiffer>false</organismsDiffer>
    <experiments>3</experiments>
</comment>
<comment type="interaction">
    <interactant intactId="EBI-1383687">
        <id>Q9UQM7</id>
    </interactant>
    <interactant intactId="EBI-397435">
        <id>P62158</id>
        <label>CALM3</label>
    </interactant>
    <organismsDiffer>false</organismsDiffer>
    <experiments>2</experiments>
</comment>
<comment type="interaction">
    <interactant intactId="EBI-1383687">
        <id>Q9UQM7</id>
    </interactant>
    <interactant intactId="EBI-1383687">
        <id>Q9UQM7</id>
        <label>CAMK2A</label>
    </interactant>
    <organismsDiffer>false</organismsDiffer>
    <experiments>2</experiments>
</comment>
<comment type="interaction">
    <interactant intactId="EBI-1383687">
        <id>Q9UQM7</id>
    </interactant>
    <interactant intactId="EBI-1058722">
        <id>Q13554</id>
        <label>CAMK2B</label>
    </interactant>
    <organismsDiffer>false</organismsDiffer>
    <experiments>5</experiments>
</comment>
<comment type="interaction">
    <interactant intactId="EBI-1383687">
        <id>Q9UQM7</id>
    </interactant>
    <interactant intactId="EBI-11523526">
        <id>Q13554-3</id>
        <label>CAMK2B</label>
    </interactant>
    <organismsDiffer>false</organismsDiffer>
    <experiments>3</experiments>
</comment>
<comment type="interaction">
    <interactant intactId="EBI-1383687">
        <id>Q9UQM7</id>
    </interactant>
    <interactant intactId="EBI-351018">
        <id>Q13557</id>
        <label>CAMK2D</label>
    </interactant>
    <organismsDiffer>false</organismsDiffer>
    <experiments>8</experiments>
</comment>
<comment type="interaction">
    <interactant intactId="EBI-1383687">
        <id>Q9UQM7</id>
    </interactant>
    <interactant intactId="EBI-11534483">
        <id>Q13557-8</id>
        <label>CAMK2D</label>
    </interactant>
    <organismsDiffer>false</organismsDiffer>
    <experiments>3</experiments>
</comment>
<comment type="interaction">
    <interactant intactId="EBI-1383687">
        <id>Q9UQM7</id>
    </interactant>
    <interactant intactId="EBI-12020154">
        <id>Q13555-5</id>
        <label>CAMK2G</label>
    </interactant>
    <organismsDiffer>false</organismsDiffer>
    <experiments>3</experiments>
</comment>
<comment type="interaction">
    <interactant intactId="EBI-1383687">
        <id>Q9UQM7</id>
    </interactant>
    <interactant intactId="EBI-740135">
        <id>P35520</id>
        <label>CBS</label>
    </interactant>
    <organismsDiffer>false</organismsDiffer>
    <experiments>3</experiments>
</comment>
<comment type="interaction">
    <interactant intactId="EBI-1383687">
        <id>Q9UQM7</id>
    </interactant>
    <interactant intactId="EBI-295634">
        <id>Q16543</id>
        <label>CDC37</label>
    </interactant>
    <organismsDiffer>false</organismsDiffer>
    <experiments>5</experiments>
</comment>
<comment type="interaction">
    <interactant intactId="EBI-1383687">
        <id>Q9UQM7</id>
    </interactant>
    <interactant intactId="EBI-724310">
        <id>Q15038</id>
        <label>DAZAP2</label>
    </interactant>
    <organismsDiffer>false</organismsDiffer>
    <experiments>3</experiments>
</comment>
<comment type="interaction">
    <interactant intactId="EBI-1383687">
        <id>Q9UQM7</id>
    </interactant>
    <interactant intactId="EBI-11978259">
        <id>Q92567-2</id>
        <label>FAM168A</label>
    </interactant>
    <organismsDiffer>false</organismsDiffer>
    <experiments>3</experiments>
</comment>
<comment type="interaction">
    <interactant intactId="EBI-1383687">
        <id>Q9UQM7</id>
    </interactant>
    <interactant intactId="EBI-12193763">
        <id>A1KXE4-2</id>
        <label>FAM168B</label>
    </interactant>
    <organismsDiffer>false</organismsDiffer>
    <experiments>3</experiments>
</comment>
<comment type="interaction">
    <interactant intactId="EBI-1383687">
        <id>Q9UQM7</id>
    </interactant>
    <interactant intactId="EBI-354056">
        <id>P04406</id>
        <label>GAPDH</label>
    </interactant>
    <organismsDiffer>false</organismsDiffer>
    <experiments>3</experiments>
</comment>
<comment type="interaction">
    <interactant intactId="EBI-1383687">
        <id>Q9UQM7</id>
    </interactant>
    <interactant intactId="EBI-11954377">
        <id>Q8IW92</id>
        <label>GLB1L2</label>
    </interactant>
    <organismsDiffer>false</organismsDiffer>
    <experiments>3</experiments>
</comment>
<comment type="interaction">
    <interactant intactId="EBI-1383687">
        <id>Q9UQM7</id>
    </interactant>
    <interactant intactId="EBI-2256942">
        <id>Q13224</id>
        <label>GRIN2B</label>
    </interactant>
    <organismsDiffer>false</organismsDiffer>
    <experiments>3</experiments>
</comment>
<comment type="interaction">
    <interactant intactId="EBI-1383687">
        <id>Q9UQM7</id>
    </interactant>
    <interactant intactId="EBI-296047">
        <id>P07900</id>
        <label>HSP90AA1</label>
    </interactant>
    <organismsDiffer>false</organismsDiffer>
    <experiments>5</experiments>
</comment>
<comment type="interaction">
    <interactant intactId="EBI-1383687">
        <id>Q9UQM7</id>
    </interactant>
    <interactant intactId="EBI-352572">
        <id>P08238</id>
        <label>HSP90AB1</label>
    </interactant>
    <organismsDiffer>false</organismsDiffer>
    <experiments>3</experiments>
</comment>
<comment type="interaction">
    <interactant intactId="EBI-1383687">
        <id>Q9UQM7</id>
    </interactant>
    <interactant intactId="EBI-3913399">
        <id>O43820</id>
        <label>HYAL3</label>
    </interactant>
    <organismsDiffer>false</organismsDiffer>
    <experiments>3</experiments>
</comment>
<comment type="interaction">
    <interactant intactId="EBI-1383687">
        <id>Q9UQM7</id>
    </interactant>
    <interactant intactId="EBI-2949715">
        <id>O95678</id>
        <label>KRT75</label>
    </interactant>
    <organismsDiffer>false</organismsDiffer>
    <experiments>3</experiments>
</comment>
<comment type="interaction">
    <interactant intactId="EBI-1383687">
        <id>Q9UQM7</id>
    </interactant>
    <interactant intactId="EBI-2952745">
        <id>Q01546</id>
        <label>KRT76</label>
    </interactant>
    <organismsDiffer>false</organismsDiffer>
    <experiments>3</experiments>
</comment>
<comment type="interaction">
    <interactant intactId="EBI-1383687">
        <id>Q9UQM7</id>
    </interactant>
    <interactant intactId="EBI-11992140">
        <id>Q3LI76</id>
        <label>KRTAP15-1</label>
    </interactant>
    <organismsDiffer>false</organismsDiffer>
    <experiments>3</experiments>
</comment>
<comment type="interaction">
    <interactant intactId="EBI-1383687">
        <id>Q9UQM7</id>
    </interactant>
    <interactant intactId="EBI-12020132">
        <id>Q7Z4W3</id>
        <label>KRTAP19-3</label>
    </interactant>
    <organismsDiffer>false</organismsDiffer>
    <experiments>3</experiments>
</comment>
<comment type="interaction">
    <interactant intactId="EBI-1383687">
        <id>Q9UQM7</id>
    </interactant>
    <interactant intactId="EBI-1048945">
        <id>Q3LI72</id>
        <label>KRTAP19-5</label>
    </interactant>
    <organismsDiffer>false</organismsDiffer>
    <experiments>3</experiments>
</comment>
<comment type="interaction">
    <interactant intactId="EBI-1383687">
        <id>Q9UQM7</id>
    </interactant>
    <interactant intactId="EBI-10241353">
        <id>Q3SYF9</id>
        <label>KRTAP19-7</label>
    </interactant>
    <organismsDiffer>false</organismsDiffer>
    <experiments>3</experiments>
</comment>
<comment type="interaction">
    <interactant intactId="EBI-1383687">
        <id>Q9UQM7</id>
    </interactant>
    <interactant intactId="EBI-10171734">
        <id>A1A580</id>
        <label>KRTAP23-1</label>
    </interactant>
    <organismsDiffer>false</organismsDiffer>
    <experiments>3</experiments>
</comment>
<comment type="interaction">
    <interactant intactId="EBI-1383687">
        <id>Q9UQM7</id>
    </interactant>
    <interactant intactId="EBI-12111050">
        <id>Q3LI64</id>
        <label>KRTAP6-1</label>
    </interactant>
    <organismsDiffer>false</organismsDiffer>
    <experiments>3</experiments>
</comment>
<comment type="interaction">
    <interactant intactId="EBI-1383687">
        <id>Q9UQM7</id>
    </interactant>
    <interactant intactId="EBI-11962084">
        <id>Q3LI66</id>
        <label>KRTAP6-2</label>
    </interactant>
    <organismsDiffer>false</organismsDiffer>
    <experiments>3</experiments>
</comment>
<comment type="interaction">
    <interactant intactId="EBI-1383687">
        <id>Q9UQM7</id>
    </interactant>
    <interactant intactId="EBI-22311199">
        <id>Q3LI67</id>
        <label>KRTAP6-3</label>
    </interactant>
    <organismsDiffer>false</organismsDiffer>
    <experiments>3</experiments>
</comment>
<comment type="interaction">
    <interactant intactId="EBI-1383687">
        <id>Q9UQM7</id>
    </interactant>
    <interactant intactId="EBI-10261141">
        <id>Q8IUC2</id>
        <label>KRTAP8-1</label>
    </interactant>
    <organismsDiffer>false</organismsDiffer>
    <experiments>3</experiments>
</comment>
<comment type="interaction">
    <interactant intactId="EBI-1383687">
        <id>Q9UQM7</id>
    </interactant>
    <interactant intactId="EBI-9088686">
        <id>Q14847-2</id>
        <label>LASP1</label>
    </interactant>
    <organismsDiffer>false</organismsDiffer>
    <experiments>3</experiments>
</comment>
<comment type="interaction">
    <interactant intactId="EBI-1383687">
        <id>Q9UQM7</id>
    </interactant>
    <interactant intactId="EBI-739546">
        <id>Q96PV6</id>
        <label>LENG8</label>
    </interactant>
    <organismsDiffer>false</organismsDiffer>
    <experiments>3</experiments>
</comment>
<comment type="interaction">
    <interactant intactId="EBI-1383687">
        <id>Q9UQM7</id>
    </interactant>
    <interactant intactId="EBI-12345753">
        <id>Q13387-4</id>
        <label>MAPK8IP2</label>
    </interactant>
    <organismsDiffer>false</organismsDiffer>
    <experiments>3</experiments>
</comment>
<comment type="interaction">
    <interactant intactId="EBI-1383687">
        <id>Q9UQM7</id>
    </interactant>
    <interactant intactId="EBI-5453723">
        <id>Q9Y3B7</id>
        <label>MRPL11</label>
    </interactant>
    <organismsDiffer>false</organismsDiffer>
    <experiments>3</experiments>
</comment>
<comment type="interaction">
    <interactant intactId="EBI-1383687">
        <id>Q9UQM7</id>
    </interactant>
    <interactant intactId="EBI-12135485">
        <id>P41271-2</id>
        <label>NBL1</label>
    </interactant>
    <organismsDiffer>false</organismsDiffer>
    <experiments>3</experiments>
</comment>
<comment type="interaction">
    <interactant intactId="EBI-1383687">
        <id>Q9UQM7</id>
    </interactant>
    <interactant intactId="EBI-741158">
        <id>Q96HA8</id>
        <label>NTAQ1</label>
    </interactant>
    <organismsDiffer>false</organismsDiffer>
    <experiments>3</experiments>
</comment>
<comment type="interaction">
    <interactant intactId="EBI-1383687">
        <id>Q9UQM7</id>
    </interactant>
    <interactant intactId="EBI-716404">
        <id>P16284</id>
        <label>PECAM1</label>
    </interactant>
    <organismsDiffer>false</organismsDiffer>
    <experiments>3</experiments>
</comment>
<comment type="interaction">
    <interactant intactId="EBI-1383687">
        <id>Q9UQM7</id>
    </interactant>
    <interactant intactId="EBI-9090282">
        <id>P27986-2</id>
        <label>PIK3R1</label>
    </interactant>
    <organismsDiffer>false</organismsDiffer>
    <experiments>3</experiments>
</comment>
<comment type="interaction">
    <interactant intactId="EBI-1383687">
        <id>Q9UQM7</id>
    </interactant>
    <interactant intactId="EBI-2865290">
        <id>O14494</id>
        <label>PLPP1</label>
    </interactant>
    <organismsDiffer>false</organismsDiffer>
    <experiments>3</experiments>
</comment>
<comment type="interaction">
    <interactant intactId="EBI-1383687">
        <id>Q9UQM7</id>
    </interactant>
    <interactant intactId="EBI-712238">
        <id>P00491</id>
        <label>PNP</label>
    </interactant>
    <organismsDiffer>false</organismsDiffer>
    <experiments>3</experiments>
</comment>
<comment type="interaction">
    <interactant intactId="EBI-1383687">
        <id>Q9UQM7</id>
    </interactant>
    <interactant intactId="EBI-5774511">
        <id>P05771-2</id>
        <label>PRKCB</label>
    </interactant>
    <organismsDiffer>false</organismsDiffer>
    <experiments>3</experiments>
</comment>
<comment type="interaction">
    <interactant intactId="EBI-1383687">
        <id>Q9UQM7</id>
    </interactant>
    <interactant intactId="EBI-399437">
        <id>P20339</id>
        <label>RAB5A</label>
    </interactant>
    <organismsDiffer>false</organismsDiffer>
    <experiments>3</experiments>
</comment>
<comment type="interaction">
    <interactant intactId="EBI-1383687">
        <id>Q9UQM7</id>
    </interactant>
    <interactant intactId="EBI-11526555">
        <id>Q86SE5-3</id>
        <label>RALYL</label>
    </interactant>
    <organismsDiffer>false</organismsDiffer>
    <experiments>3</experiments>
</comment>
<comment type="interaction">
    <interactant intactId="EBI-1383687">
        <id>Q9UQM7</id>
    </interactant>
    <interactant intactId="EBI-11963050">
        <id>O43251-10</id>
        <label>RBFOX2</label>
    </interactant>
    <organismsDiffer>false</organismsDiffer>
    <experiments>3</experiments>
</comment>
<comment type="interaction">
    <interactant intactId="EBI-1383687">
        <id>Q9UQM7</id>
    </interactant>
    <interactant intactId="EBI-2823850">
        <id>A0AV96</id>
        <label>RBM47</label>
    </interactant>
    <organismsDiffer>false</organismsDiffer>
    <experiments>3</experiments>
</comment>
<comment type="interaction">
    <interactant intactId="EBI-1383687">
        <id>Q9UQM7</id>
    </interactant>
    <interactant intactId="EBI-740343">
        <id>Q93062-3</id>
        <label>RBPMS</label>
    </interactant>
    <organismsDiffer>false</organismsDiffer>
    <experiments>3</experiments>
</comment>
<comment type="interaction">
    <interactant intactId="EBI-1383687">
        <id>Q9UQM7</id>
    </interactant>
    <interactant intactId="EBI-11987469">
        <id>Q6ZRY4</id>
        <label>RBPMS2</label>
    </interactant>
    <organismsDiffer>false</organismsDiffer>
    <experiments>3</experiments>
</comment>
<comment type="interaction">
    <interactant intactId="EBI-1383687">
        <id>Q9UQM7</id>
    </interactant>
    <interactant intactId="EBI-372094">
        <id>Q9BQY4</id>
        <label>RHOXF2</label>
    </interactant>
    <organismsDiffer>false</organismsDiffer>
    <experiments>3</experiments>
</comment>
<comment type="interaction">
    <interactant intactId="EBI-1383687">
        <id>Q9UQM7</id>
    </interactant>
    <interactant intactId="EBI-458391">
        <id>P04271</id>
        <label>S100B</label>
    </interactant>
    <organismsDiffer>false</organismsDiffer>
    <experiments>3</experiments>
</comment>
<comment type="interaction">
    <interactant intactId="EBI-1383687">
        <id>Q9UQM7</id>
    </interactant>
    <interactant intactId="EBI-9691288">
        <id>P29353-7</id>
        <label>SHC1</label>
    </interactant>
    <organismsDiffer>false</organismsDiffer>
    <experiments>3</experiments>
</comment>
<comment type="interaction">
    <interactant intactId="EBI-1383687">
        <id>Q9UQM7</id>
    </interactant>
    <interactant intactId="EBI-347161">
        <id>P84022</id>
        <label>SMAD3</label>
    </interactant>
    <organismsDiffer>false</organismsDiffer>
    <experiments>3</experiments>
</comment>
<comment type="interaction">
    <interactant intactId="EBI-1383687">
        <id>Q9UQM7</id>
    </interactant>
    <interactant intactId="EBI-11954419">
        <id>P35711-4</id>
        <label>SOX5</label>
    </interactant>
    <organismsDiffer>false</organismsDiffer>
    <experiments>3</experiments>
</comment>
<comment type="interaction">
    <interactant intactId="EBI-1383687">
        <id>Q9UQM7</id>
    </interactant>
    <interactant intactId="EBI-743976">
        <id>Q96LM6</id>
        <label>SPMIP9</label>
    </interactant>
    <organismsDiffer>false</organismsDiffer>
    <experiments>3</experiments>
</comment>
<comment type="interaction">
    <interactant intactId="EBI-1383687">
        <id>Q9UQM7</id>
    </interactant>
    <interactant intactId="EBI-357085">
        <id>Q9UNE7</id>
        <label>STUB1</label>
    </interactant>
    <organismsDiffer>false</organismsDiffer>
    <experiments>3</experiments>
</comment>
<comment type="interaction">
    <interactant intactId="EBI-1383687">
        <id>Q9UQM7</id>
    </interactant>
    <interactant intactId="EBI-3921347">
        <id>P51687</id>
        <label>SUOX</label>
    </interactant>
    <organismsDiffer>false</organismsDiffer>
    <experiments>3</experiments>
</comment>
<comment type="interaction">
    <interactant intactId="EBI-1383687">
        <id>Q9UQM7</id>
    </interactant>
    <interactant intactId="EBI-358708">
        <id>Q9NYJ8</id>
        <label>TAB2</label>
    </interactant>
    <organismsDiffer>false</organismsDiffer>
    <experiments>5</experiments>
</comment>
<comment type="interaction">
    <interactant intactId="EBI-1383687">
        <id>Q9UQM7</id>
    </interactant>
    <interactant intactId="EBI-11974855">
        <id>Q9Y4C2-2</id>
        <label>TCAF1</label>
    </interactant>
    <organismsDiffer>false</organismsDiffer>
    <experiments>3</experiments>
</comment>
<comment type="interaction">
    <interactant intactId="EBI-1383687">
        <id>Q9UQM7</id>
    </interactant>
    <interactant intactId="EBI-11952651">
        <id>Q7Z6R9</id>
        <label>TFAP2D</label>
    </interactant>
    <organismsDiffer>false</organismsDiffer>
    <experiments>3</experiments>
</comment>
<comment type="interaction">
    <interactant intactId="EBI-1383687">
        <id>Q9UQM7</id>
    </interactant>
    <interactant intactId="EBI-11064654">
        <id>Q01085-2</id>
        <label>TIAL1</label>
    </interactant>
    <organismsDiffer>false</organismsDiffer>
    <experiments>3</experiments>
</comment>
<comment type="interaction">
    <interactant intactId="EBI-1383687">
        <id>Q9UQM7</id>
    </interactant>
    <interactant intactId="EBI-12117154">
        <id>O60784-2</id>
        <label>TOM1</label>
    </interactant>
    <organismsDiffer>false</organismsDiffer>
    <experiments>3</experiments>
</comment>
<comment type="interaction">
    <interactant intactId="EBI-1383687">
        <id>Q9UQM7</id>
    </interactant>
    <interactant intactId="EBI-746981">
        <id>Q969E8</id>
        <label>TSR2</label>
    </interactant>
    <organismsDiffer>false</organismsDiffer>
    <experiments>3</experiments>
</comment>
<comment type="interaction">
    <interactant intactId="EBI-1383687">
        <id>Q9UQM7</id>
    </interactant>
    <interactant intactId="EBI-9526213">
        <id>Q8N0Z6</id>
        <label>TTC5</label>
    </interactant>
    <organismsDiffer>false</organismsDiffer>
    <experiments>3</experiments>
</comment>
<comment type="interaction">
    <interactant intactId="EBI-1383687">
        <id>Q9UQM7</id>
    </interactant>
    <interactant intactId="EBI-473850">
        <id>P61086</id>
        <label>UBE2K</label>
    </interactant>
    <organismsDiffer>false</organismsDiffer>
    <experiments>3</experiments>
</comment>
<comment type="interaction">
    <interactant intactId="EBI-1383687">
        <id>Q9UQM7</id>
    </interactant>
    <interactant intactId="EBI-25834258">
        <id>P13051-2</id>
        <label>UNG</label>
    </interactant>
    <organismsDiffer>false</organismsDiffer>
    <experiments>3</experiments>
</comment>
<comment type="interaction">
    <interactant intactId="EBI-1383687">
        <id>Q9UQM7</id>
    </interactant>
    <interactant intactId="EBI-473284">
        <id>Q9BVJ6</id>
        <label>UTP14A</label>
    </interactant>
    <organismsDiffer>false</organismsDiffer>
    <experiments>3</experiments>
</comment>
<comment type="interaction">
    <interactant intactId="EBI-1383687">
        <id>Q9UQM7</id>
    </interactant>
    <interactant intactId="EBI-355765">
        <id>P26640</id>
        <label>VARS1</label>
    </interactant>
    <organismsDiffer>false</organismsDiffer>
    <experiments>3</experiments>
</comment>
<comment type="interaction">
    <interactant intactId="EBI-1383687">
        <id>Q9UQM7</id>
    </interactant>
    <interactant intactId="EBI-353844">
        <id>P08670</id>
        <label>VIM</label>
    </interactant>
    <organismsDiffer>false</organismsDiffer>
    <experiments>3</experiments>
</comment>
<comment type="interaction">
    <interactant intactId="EBI-1383687">
        <id>Q9UQM7</id>
    </interactant>
    <interactant intactId="EBI-11141397">
        <id>Q9UBQ0-2</id>
        <label>VPS29</label>
    </interactant>
    <organismsDiffer>false</organismsDiffer>
    <experiments>3</experiments>
</comment>
<comment type="interaction">
    <interactant intactId="EBI-1383687">
        <id>Q9UQM7</id>
    </interactant>
    <interactant intactId="EBI-356498">
        <id>P62258</id>
        <label>YWHAE</label>
    </interactant>
    <organismsDiffer>false</organismsDiffer>
    <experiments>2</experiments>
</comment>
<comment type="interaction">
    <interactant intactId="EBI-1383687">
        <id>Q9UQM7</id>
    </interactant>
    <interactant intactId="EBI-10188476">
        <id>A0A0C4DGF1</id>
        <label>ZBTB32</label>
    </interactant>
    <organismsDiffer>false</organismsDiffer>
    <experiments>3</experiments>
</comment>
<comment type="subcellular location">
    <subcellularLocation>
        <location evidence="2">Synapse</location>
    </subcellularLocation>
    <subcellularLocation>
        <location evidence="2">Postsynaptic density</location>
    </subcellularLocation>
    <subcellularLocation>
        <location evidence="11">Cell projection</location>
        <location evidence="11">Dendritic spine</location>
    </subcellularLocation>
    <subcellularLocation>
        <location evidence="11">Cell projection</location>
        <location evidence="11">Dendrite</location>
    </subcellularLocation>
    <text evidence="2">Postsynaptic lipid rafts.</text>
</comment>
<comment type="alternative products">
    <event type="alternative splicing"/>
    <isoform>
        <id>Q9UQM7-1</id>
        <name>A</name>
        <sequence type="displayed"/>
    </isoform>
    <isoform>
        <id>Q9UQM7-2</id>
        <name>B</name>
        <sequence type="described" ref="VSP_004766"/>
    </isoform>
</comment>
<comment type="PTM">
    <text evidence="8">Autophosphorylation of Thr-286 following activation by Ca(2+)/calmodulin. Phosphorylation of Thr-286 locks the kinase into an activated state.</text>
</comment>
<comment type="PTM">
    <text evidence="2">Palmitoylated. Probably palmitoylated by ZDHHC3 and ZDHHC7.</text>
</comment>
<comment type="disease" evidence="10 11 12 13">
    <disease id="DI-05154">
        <name>Intellectual developmental disorder, autosomal dominant 53</name>
        <acronym>MRD53</acronym>
        <description>A disorder characterized by significantly below average general intellectual functioning associated with impairments in adaptive behavior and manifested during the developmental period.</description>
        <dbReference type="MIM" id="617798"/>
    </disease>
    <text>The disease is caused by variants affecting the gene represented in this entry.</text>
</comment>
<comment type="disease" evidence="14">
    <disease id="DI-05317">
        <name>Intellectual developmental disorder, autosomal recessive 63</name>
        <acronym>MRT63</acronym>
        <description>A disorder characterized by significantly below average general intellectual functioning associated with impairments in adaptive behavior and manifested during the developmental period. MRT63 patients manifest global developmental delay, severe intellectual disability, and seizures.</description>
        <dbReference type="MIM" id="618095"/>
    </disease>
    <text>The disease is caused by variants affecting the gene represented in this entry.</text>
</comment>
<comment type="similarity">
    <text evidence="16">Belongs to the protein kinase superfamily. CAMK Ser/Thr protein kinase family. CaMK subfamily.</text>
</comment>
<comment type="sequence caution" evidence="16">
    <conflict type="erroneous initiation">
        <sequence resource="EMBL-CDS" id="BAA76812"/>
    </conflict>
    <text>Extended N-terminus.</text>
</comment>
<organism>
    <name type="scientific">Homo sapiens</name>
    <name type="common">Human</name>
    <dbReference type="NCBI Taxonomy" id="9606"/>
    <lineage>
        <taxon>Eukaryota</taxon>
        <taxon>Metazoa</taxon>
        <taxon>Chordata</taxon>
        <taxon>Craniata</taxon>
        <taxon>Vertebrata</taxon>
        <taxon>Euteleostomi</taxon>
        <taxon>Mammalia</taxon>
        <taxon>Eutheria</taxon>
        <taxon>Euarchontoglires</taxon>
        <taxon>Primates</taxon>
        <taxon>Haplorrhini</taxon>
        <taxon>Catarrhini</taxon>
        <taxon>Hominidae</taxon>
        <taxon>Homo</taxon>
    </lineage>
</organism>
<dbReference type="EC" id="2.7.11.17" evidence="9"/>
<dbReference type="EMBL" id="AF145710">
    <property type="protein sequence ID" value="AAD30558.1"/>
    <property type="molecule type" value="mRNA"/>
</dbReference>
<dbReference type="EMBL" id="AF145711">
    <property type="protein sequence ID" value="AAD30559.1"/>
    <property type="molecule type" value="mRNA"/>
</dbReference>
<dbReference type="EMBL" id="AB023185">
    <property type="protein sequence ID" value="BAA76812.1"/>
    <property type="status" value="ALT_INIT"/>
    <property type="molecule type" value="mRNA"/>
</dbReference>
<dbReference type="EMBL" id="AC011372">
    <property type="status" value="NOT_ANNOTATED_CDS"/>
    <property type="molecule type" value="Genomic_DNA"/>
</dbReference>
<dbReference type="CCDS" id="CCDS43386.1">
    <molecule id="Q9UQM7-1"/>
</dbReference>
<dbReference type="CCDS" id="CCDS43387.1">
    <molecule id="Q9UQM7-2"/>
</dbReference>
<dbReference type="RefSeq" id="NP_001350918.1">
    <molecule id="Q9UQM7-2"/>
    <property type="nucleotide sequence ID" value="NM_001363989.1"/>
</dbReference>
<dbReference type="RefSeq" id="NP_001350919.1">
    <molecule id="Q9UQM7-1"/>
    <property type="nucleotide sequence ID" value="NM_001363990.1"/>
</dbReference>
<dbReference type="RefSeq" id="NP_741960.1">
    <molecule id="Q9UQM7-1"/>
    <property type="nucleotide sequence ID" value="NM_171825.3"/>
</dbReference>
<dbReference type="PDB" id="2VZ6">
    <property type="method" value="X-ray"/>
    <property type="resolution" value="2.30 A"/>
    <property type="chains" value="A/B=13-302"/>
</dbReference>
<dbReference type="PDB" id="3SOA">
    <property type="method" value="X-ray"/>
    <property type="resolution" value="3.55 A"/>
    <property type="chains" value="A=1-474"/>
</dbReference>
<dbReference type="PDB" id="5IG3">
    <property type="method" value="X-ray"/>
    <property type="resolution" value="2.75 A"/>
    <property type="chains" value="A/B/C/D/E/F=345-475"/>
</dbReference>
<dbReference type="PDB" id="6OF8">
    <property type="method" value="X-ray"/>
    <property type="resolution" value="2.10 A"/>
    <property type="chains" value="A/B/C/D/E/F/G=345-475"/>
</dbReference>
<dbReference type="PDB" id="6VZK">
    <property type="method" value="X-ray"/>
    <property type="resolution" value="2.55 A"/>
    <property type="chains" value="A=7-274"/>
</dbReference>
<dbReference type="PDB" id="6W4O">
    <property type="method" value="EM"/>
    <property type="resolution" value="4.80 A"/>
    <property type="chains" value="A/B/C/D/E/F/G/I/J/K/L/M/O=7-478"/>
</dbReference>
<dbReference type="PDB" id="6W4P">
    <property type="method" value="EM"/>
    <property type="resolution" value="6.60 A"/>
    <property type="chains" value="A/B/C/D/E/F/G/H/I/J/K/L/M=7-478"/>
</dbReference>
<dbReference type="PDB" id="6X5G">
    <property type="method" value="X-ray"/>
    <property type="resolution" value="1.85 A"/>
    <property type="chains" value="A=7-274"/>
</dbReference>
<dbReference type="PDB" id="6X5Q">
    <property type="method" value="X-ray"/>
    <property type="resolution" value="2.14 A"/>
    <property type="chains" value="A=7-274"/>
</dbReference>
<dbReference type="PDB" id="7KL0">
    <property type="method" value="X-ray"/>
    <property type="resolution" value="2.40 A"/>
    <property type="chains" value="A/B=7-274"/>
</dbReference>
<dbReference type="PDB" id="7KL1">
    <property type="method" value="X-ray"/>
    <property type="resolution" value="2.40 A"/>
    <property type="chains" value="A/B=7-274"/>
</dbReference>
<dbReference type="PDB" id="7KL2">
    <property type="method" value="X-ray"/>
    <property type="resolution" value="2.56 A"/>
    <property type="chains" value="A=7-274"/>
</dbReference>
<dbReference type="PDB" id="7REC">
    <property type="method" value="X-ray"/>
    <property type="resolution" value="2.20 A"/>
    <property type="chains" value="A/B/C/D/E/F/G=345-475"/>
</dbReference>
<dbReference type="PDB" id="7UIQ">
    <property type="method" value="X-ray"/>
    <property type="resolution" value="3.11 A"/>
    <property type="chains" value="A/B=7-274"/>
</dbReference>
<dbReference type="PDB" id="7UIR">
    <property type="method" value="X-ray"/>
    <property type="resolution" value="3.10 A"/>
    <property type="chains" value="A/B=7-274"/>
</dbReference>
<dbReference type="PDB" id="7UIS">
    <property type="method" value="X-ray"/>
    <property type="resolution" value="2.58 A"/>
    <property type="chains" value="A=7-274"/>
</dbReference>
<dbReference type="PDB" id="7UJP">
    <property type="method" value="X-ray"/>
    <property type="resolution" value="2.56 A"/>
    <property type="chains" value="A/B=7-274"/>
</dbReference>
<dbReference type="PDB" id="7UJQ">
    <property type="method" value="X-ray"/>
    <property type="resolution" value="2.25 A"/>
    <property type="chains" value="A/B=7-274"/>
</dbReference>
<dbReference type="PDB" id="7UJR">
    <property type="method" value="X-ray"/>
    <property type="resolution" value="1.95 A"/>
    <property type="chains" value="A=7-274"/>
</dbReference>
<dbReference type="PDB" id="7UJS">
    <property type="method" value="X-ray"/>
    <property type="resolution" value="2.75 A"/>
    <property type="chains" value="A=7-274"/>
</dbReference>
<dbReference type="PDB" id="7UJT">
    <property type="method" value="X-ray"/>
    <property type="resolution" value="2.10 A"/>
    <property type="chains" value="A=7-274"/>
</dbReference>
<dbReference type="PDB" id="9EOY">
    <property type="method" value="X-ray"/>
    <property type="resolution" value="2.10 A"/>
    <property type="chains" value="A/B/C/D/E/F/G=345-475"/>
</dbReference>
<dbReference type="PDBsum" id="2VZ6"/>
<dbReference type="PDBsum" id="3SOA"/>
<dbReference type="PDBsum" id="5IG3"/>
<dbReference type="PDBsum" id="6OF8"/>
<dbReference type="PDBsum" id="6VZK"/>
<dbReference type="PDBsum" id="6W4O"/>
<dbReference type="PDBsum" id="6W4P"/>
<dbReference type="PDBsum" id="6X5G"/>
<dbReference type="PDBsum" id="6X5Q"/>
<dbReference type="PDBsum" id="7KL0"/>
<dbReference type="PDBsum" id="7KL1"/>
<dbReference type="PDBsum" id="7KL2"/>
<dbReference type="PDBsum" id="7REC"/>
<dbReference type="PDBsum" id="7UIQ"/>
<dbReference type="PDBsum" id="7UIR"/>
<dbReference type="PDBsum" id="7UIS"/>
<dbReference type="PDBsum" id="7UJP"/>
<dbReference type="PDBsum" id="7UJQ"/>
<dbReference type="PDBsum" id="7UJR"/>
<dbReference type="PDBsum" id="7UJS"/>
<dbReference type="PDBsum" id="7UJT"/>
<dbReference type="PDBsum" id="9EOY"/>
<dbReference type="EMDB" id="EMD-21535"/>
<dbReference type="EMDB" id="EMD-21536"/>
<dbReference type="SASBDB" id="Q9UQM7"/>
<dbReference type="SMR" id="Q9UQM7"/>
<dbReference type="BioGRID" id="107265">
    <property type="interactions" value="232"/>
</dbReference>
<dbReference type="CORUM" id="Q9UQM7"/>
<dbReference type="DIP" id="DIP-39705N"/>
<dbReference type="FunCoup" id="Q9UQM7">
    <property type="interactions" value="1785"/>
</dbReference>
<dbReference type="IntAct" id="Q9UQM7">
    <property type="interactions" value="208"/>
</dbReference>
<dbReference type="MINT" id="Q9UQM7"/>
<dbReference type="STRING" id="9606.ENSP00000500386"/>
<dbReference type="BindingDB" id="Q9UQM7"/>
<dbReference type="ChEMBL" id="CHEMBL4147"/>
<dbReference type="DrugBank" id="DB07766">
    <property type="generic name" value="(2Z,3E)-2,3'-biindole-2',3(1H,1'H)-dione 3-{O-[(3R)-3,4-dihydroxybutyl]oxime}"/>
</dbReference>
<dbReference type="DrugBank" id="DB04447">
    <property type="generic name" value="1,4-Dithiothreitol"/>
</dbReference>
<dbReference type="DrugBank" id="DB12010">
    <property type="generic name" value="Fostamatinib"/>
</dbReference>
<dbReference type="DrugBank" id="DB04119">
    <property type="generic name" value="Hexatantalum Dodecabromide"/>
</dbReference>
<dbReference type="DrugBank" id="DB12571">
    <property type="generic name" value="Rimacalib"/>
</dbReference>
<dbReference type="DrugCentral" id="Q9UQM7"/>
<dbReference type="GlyCosmos" id="Q9UQM7">
    <property type="glycosylation" value="1 site, 1 glycan"/>
</dbReference>
<dbReference type="GlyGen" id="Q9UQM7">
    <property type="glycosylation" value="2 sites, 1 O-linked glycan (1 site)"/>
</dbReference>
<dbReference type="iPTMnet" id="Q9UQM7"/>
<dbReference type="PhosphoSitePlus" id="Q9UQM7"/>
<dbReference type="BioMuta" id="CAMK2A"/>
<dbReference type="DMDM" id="296434552"/>
<dbReference type="jPOST" id="Q9UQM7"/>
<dbReference type="MassIVE" id="Q9UQM7"/>
<dbReference type="PaxDb" id="9606-ENSP00000381412"/>
<dbReference type="PeptideAtlas" id="Q9UQM7"/>
<dbReference type="ProteomicsDB" id="85559">
    <molecule id="Q9UQM7-1"/>
</dbReference>
<dbReference type="ProteomicsDB" id="85560">
    <molecule id="Q9UQM7-2"/>
</dbReference>
<dbReference type="Antibodypedia" id="3814">
    <property type="antibodies" value="867 antibodies from 51 providers"/>
</dbReference>
<dbReference type="DNASU" id="815"/>
<dbReference type="Ensembl" id="ENST00000348628.11">
    <molecule id="Q9UQM7-1"/>
    <property type="protein sequence ID" value="ENSP00000261793.8"/>
    <property type="gene ID" value="ENSG00000070808.17"/>
</dbReference>
<dbReference type="Ensembl" id="ENST00000671881.1">
    <molecule id="Q9UQM7-2"/>
    <property type="protein sequence ID" value="ENSP00000500386.1"/>
    <property type="gene ID" value="ENSG00000070808.17"/>
</dbReference>
<dbReference type="Ensembl" id="ENST00000672479.1">
    <molecule id="Q9UQM7-1"/>
    <property type="protein sequence ID" value="ENSP00000500642.1"/>
    <property type="gene ID" value="ENSG00000070808.17"/>
</dbReference>
<dbReference type="Ensembl" id="ENST00000682786.1">
    <molecule id="Q9UQM7-2"/>
    <property type="protein sequence ID" value="ENSP00000507199.1"/>
    <property type="gene ID" value="ENSG00000070808.17"/>
</dbReference>
<dbReference type="GeneID" id="815"/>
<dbReference type="KEGG" id="hsa:815"/>
<dbReference type="MANE-Select" id="ENST00000671881.1">
    <molecule id="Q9UQM7-2"/>
    <property type="protein sequence ID" value="ENSP00000500386.1"/>
    <property type="RefSeq nucleotide sequence ID" value="NM_015981.4"/>
    <property type="RefSeq protein sequence ID" value="NP_057065.2"/>
</dbReference>
<dbReference type="UCSC" id="uc003lrt.3">
    <molecule id="Q9UQM7-1"/>
    <property type="organism name" value="human"/>
</dbReference>
<dbReference type="AGR" id="HGNC:1460"/>
<dbReference type="CTD" id="815"/>
<dbReference type="DisGeNET" id="815"/>
<dbReference type="GeneCards" id="CAMK2A"/>
<dbReference type="HGNC" id="HGNC:1460">
    <property type="gene designation" value="CAMK2A"/>
</dbReference>
<dbReference type="HPA" id="ENSG00000070808">
    <property type="expression patterns" value="Group enriched (brain, skeletal muscle)"/>
</dbReference>
<dbReference type="MalaCards" id="CAMK2A"/>
<dbReference type="MIM" id="114078">
    <property type="type" value="gene"/>
</dbReference>
<dbReference type="MIM" id="617798">
    <property type="type" value="phenotype"/>
</dbReference>
<dbReference type="MIM" id="618095">
    <property type="type" value="phenotype"/>
</dbReference>
<dbReference type="neXtProt" id="NX_Q9UQM7"/>
<dbReference type="OpenTargets" id="ENSG00000070808"/>
<dbReference type="Orphanet" id="178469">
    <property type="disease" value="Autosomal dominant non-syndromic intellectual disability"/>
</dbReference>
<dbReference type="PharmGKB" id="PA90"/>
<dbReference type="VEuPathDB" id="HostDB:ENSG00000070808"/>
<dbReference type="eggNOG" id="KOG0033">
    <property type="taxonomic scope" value="Eukaryota"/>
</dbReference>
<dbReference type="GeneTree" id="ENSGT00940000155150"/>
<dbReference type="HOGENOM" id="CLU_000288_71_0_1"/>
<dbReference type="InParanoid" id="Q9UQM7"/>
<dbReference type="OMA" id="YFENCEF"/>
<dbReference type="OrthoDB" id="336747at2759"/>
<dbReference type="PAN-GO" id="Q9UQM7">
    <property type="GO annotations" value="4 GO annotations based on evolutionary models"/>
</dbReference>
<dbReference type="PhylomeDB" id="Q9UQM7"/>
<dbReference type="TreeFam" id="TF315229"/>
<dbReference type="BRENDA" id="2.7.11.17">
    <property type="organism ID" value="2681"/>
</dbReference>
<dbReference type="PathwayCommons" id="Q9UQM7"/>
<dbReference type="Reactome" id="R-HSA-111932">
    <property type="pathway name" value="CaMK IV-mediated phosphorylation of CREB"/>
</dbReference>
<dbReference type="Reactome" id="R-HSA-3371571">
    <property type="pathway name" value="HSF1-dependent transactivation"/>
</dbReference>
<dbReference type="Reactome" id="R-HSA-399719">
    <property type="pathway name" value="Trafficking of AMPA receptors"/>
</dbReference>
<dbReference type="Reactome" id="R-HSA-4086398">
    <property type="pathway name" value="Ca2+ pathway"/>
</dbReference>
<dbReference type="Reactome" id="R-HSA-438066">
    <property type="pathway name" value="Unblocking of NMDA receptors, glutamate binding and activation"/>
</dbReference>
<dbReference type="Reactome" id="R-HSA-442982">
    <property type="pathway name" value="Ras activation upon Ca2+ influx through NMDA receptor"/>
</dbReference>
<dbReference type="Reactome" id="R-HSA-5576892">
    <property type="pathway name" value="Phase 0 - rapid depolarisation"/>
</dbReference>
<dbReference type="Reactome" id="R-HSA-5578775">
    <property type="pathway name" value="Ion homeostasis"/>
</dbReference>
<dbReference type="Reactome" id="R-HSA-5673000">
    <property type="pathway name" value="RAF activation"/>
</dbReference>
<dbReference type="Reactome" id="R-HSA-5673001">
    <property type="pathway name" value="RAF/MAP kinase cascade"/>
</dbReference>
<dbReference type="Reactome" id="R-HSA-6802946">
    <property type="pathway name" value="Signaling by moderate kinase activity BRAF mutants"/>
</dbReference>
<dbReference type="Reactome" id="R-HSA-6802952">
    <property type="pathway name" value="Signaling by BRAF and RAF1 fusions"/>
</dbReference>
<dbReference type="Reactome" id="R-HSA-6802955">
    <property type="pathway name" value="Paradoxical activation of RAF signaling by kinase inactive BRAF"/>
</dbReference>
<dbReference type="Reactome" id="R-HSA-877300">
    <property type="pathway name" value="Interferon gamma signaling"/>
</dbReference>
<dbReference type="Reactome" id="R-HSA-9022692">
    <property type="pathway name" value="Regulation of MECP2 expression and activity"/>
</dbReference>
<dbReference type="Reactome" id="R-HSA-936837">
    <property type="pathway name" value="Ion transport by P-type ATPases"/>
</dbReference>
<dbReference type="Reactome" id="R-HSA-9609736">
    <property type="pathway name" value="Assembly and cell surface presentation of NMDA receptors"/>
</dbReference>
<dbReference type="Reactome" id="R-HSA-9617324">
    <property type="pathway name" value="Negative regulation of NMDA receptor-mediated neuronal transmission"/>
</dbReference>
<dbReference type="Reactome" id="R-HSA-9620244">
    <property type="pathway name" value="Long-term potentiation"/>
</dbReference>
<dbReference type="Reactome" id="R-HSA-9649948">
    <property type="pathway name" value="Signaling downstream of RAS mutants"/>
</dbReference>
<dbReference type="Reactome" id="R-HSA-9656223">
    <property type="pathway name" value="Signaling by RAF1 mutants"/>
</dbReference>
<dbReference type="SignaLink" id="Q9UQM7"/>
<dbReference type="SIGNOR" id="Q9UQM7"/>
<dbReference type="BioGRID-ORCS" id="815">
    <property type="hits" value="16 hits in 1179 CRISPR screens"/>
</dbReference>
<dbReference type="CD-CODE" id="FB4E32DD">
    <property type="entry name" value="Presynaptic clusters and postsynaptic densities"/>
</dbReference>
<dbReference type="ChiTaRS" id="CAMK2A">
    <property type="organism name" value="human"/>
</dbReference>
<dbReference type="EvolutionaryTrace" id="Q9UQM7"/>
<dbReference type="GeneWiki" id="CAMK2A"/>
<dbReference type="GenomeRNAi" id="815"/>
<dbReference type="Pharos" id="Q9UQM7">
    <property type="development level" value="Tchem"/>
</dbReference>
<dbReference type="PRO" id="PR:Q9UQM7"/>
<dbReference type="Proteomes" id="UP000005640">
    <property type="component" value="Chromosome 5"/>
</dbReference>
<dbReference type="RNAct" id="Q9UQM7">
    <property type="molecule type" value="protein"/>
</dbReference>
<dbReference type="Bgee" id="ENSG00000070808">
    <property type="expression patterns" value="Expressed in amygdala and 144 other cell types or tissues"/>
</dbReference>
<dbReference type="ExpressionAtlas" id="Q9UQM7">
    <property type="expression patterns" value="baseline and differential"/>
</dbReference>
<dbReference type="GO" id="GO:0005954">
    <property type="term" value="C:calcium- and calmodulin-dependent protein kinase complex"/>
    <property type="evidence" value="ECO:0000314"/>
    <property type="project" value="UniProtKB"/>
</dbReference>
<dbReference type="GO" id="GO:0005737">
    <property type="term" value="C:cytoplasm"/>
    <property type="evidence" value="ECO:0000318"/>
    <property type="project" value="GO_Central"/>
</dbReference>
<dbReference type="GO" id="GO:0005829">
    <property type="term" value="C:cytosol"/>
    <property type="evidence" value="ECO:0000304"/>
    <property type="project" value="Reactome"/>
</dbReference>
<dbReference type="GO" id="GO:0043197">
    <property type="term" value="C:dendritic spine"/>
    <property type="evidence" value="ECO:0000314"/>
    <property type="project" value="UniProtKB"/>
</dbReference>
<dbReference type="GO" id="GO:0030666">
    <property type="term" value="C:endocytic vesicle membrane"/>
    <property type="evidence" value="ECO:0000304"/>
    <property type="project" value="Reactome"/>
</dbReference>
<dbReference type="GO" id="GO:0005739">
    <property type="term" value="C:mitochondrion"/>
    <property type="evidence" value="ECO:0000250"/>
    <property type="project" value="ParkinsonsUK-UCL"/>
</dbReference>
<dbReference type="GO" id="GO:0043005">
    <property type="term" value="C:neuron projection"/>
    <property type="evidence" value="ECO:0000318"/>
    <property type="project" value="GO_Central"/>
</dbReference>
<dbReference type="GO" id="GO:0005654">
    <property type="term" value="C:nucleoplasm"/>
    <property type="evidence" value="ECO:0000304"/>
    <property type="project" value="Reactome"/>
</dbReference>
<dbReference type="GO" id="GO:0005634">
    <property type="term" value="C:nucleus"/>
    <property type="evidence" value="ECO:0007005"/>
    <property type="project" value="UniProtKB"/>
</dbReference>
<dbReference type="GO" id="GO:0014069">
    <property type="term" value="C:postsynaptic density"/>
    <property type="evidence" value="ECO:0000318"/>
    <property type="project" value="GO_Central"/>
</dbReference>
<dbReference type="GO" id="GO:0005524">
    <property type="term" value="F:ATP binding"/>
    <property type="evidence" value="ECO:0007669"/>
    <property type="project" value="UniProtKB-KW"/>
</dbReference>
<dbReference type="GO" id="GO:0004683">
    <property type="term" value="F:calcium/calmodulin-dependent protein kinase activity"/>
    <property type="evidence" value="ECO:0000314"/>
    <property type="project" value="UniProtKB"/>
</dbReference>
<dbReference type="GO" id="GO:0005516">
    <property type="term" value="F:calmodulin binding"/>
    <property type="evidence" value="ECO:0000353"/>
    <property type="project" value="BHF-UCL"/>
</dbReference>
<dbReference type="GO" id="GO:0035254">
    <property type="term" value="F:glutamate receptor binding"/>
    <property type="evidence" value="ECO:0000250"/>
    <property type="project" value="ParkinsonsUK-UCL"/>
</dbReference>
<dbReference type="GO" id="GO:0042802">
    <property type="term" value="F:identical protein binding"/>
    <property type="evidence" value="ECO:0000353"/>
    <property type="project" value="IntAct"/>
</dbReference>
<dbReference type="GO" id="GO:0016301">
    <property type="term" value="F:kinase activity"/>
    <property type="evidence" value="ECO:0000314"/>
    <property type="project" value="UniProtKB"/>
</dbReference>
<dbReference type="GO" id="GO:0046872">
    <property type="term" value="F:metal ion binding"/>
    <property type="evidence" value="ECO:0007669"/>
    <property type="project" value="UniProtKB-KW"/>
</dbReference>
<dbReference type="GO" id="GO:0042803">
    <property type="term" value="F:protein homodimerization activity"/>
    <property type="evidence" value="ECO:0000353"/>
    <property type="project" value="BHF-UCL"/>
</dbReference>
<dbReference type="GO" id="GO:0106310">
    <property type="term" value="F:protein serine kinase activity"/>
    <property type="evidence" value="ECO:0007669"/>
    <property type="project" value="RHEA"/>
</dbReference>
<dbReference type="GO" id="GO:0004674">
    <property type="term" value="F:protein serine/threonine kinase activity"/>
    <property type="evidence" value="ECO:0000314"/>
    <property type="project" value="UniProtKB"/>
</dbReference>
<dbReference type="GO" id="GO:0038166">
    <property type="term" value="P:angiotensin-activated signaling pathway"/>
    <property type="evidence" value="ECO:0000314"/>
    <property type="project" value="UniProtKB"/>
</dbReference>
<dbReference type="GO" id="GO:0006816">
    <property type="term" value="P:calcium ion transport"/>
    <property type="evidence" value="ECO:0000250"/>
    <property type="project" value="ParkinsonsUK-UCL"/>
</dbReference>
<dbReference type="GO" id="GO:0035458">
    <property type="term" value="P:cellular response to interferon-beta"/>
    <property type="evidence" value="ECO:0000314"/>
    <property type="project" value="UniProtKB"/>
</dbReference>
<dbReference type="GO" id="GO:0071346">
    <property type="term" value="P:cellular response to type II interferon"/>
    <property type="evidence" value="ECO:0000314"/>
    <property type="project" value="UniProt"/>
</dbReference>
<dbReference type="GO" id="GO:0060996">
    <property type="term" value="P:dendritic spine development"/>
    <property type="evidence" value="ECO:0000315"/>
    <property type="project" value="UniProtKB"/>
</dbReference>
<dbReference type="GO" id="GO:0000082">
    <property type="term" value="P:G1/S transition of mitotic cell cycle"/>
    <property type="evidence" value="ECO:0000250"/>
    <property type="project" value="ParkinsonsUK-UCL"/>
</dbReference>
<dbReference type="GO" id="GO:0060291">
    <property type="term" value="P:long-term synaptic potentiation"/>
    <property type="evidence" value="ECO:0000304"/>
    <property type="project" value="BHF-UCL"/>
</dbReference>
<dbReference type="GO" id="GO:0051346">
    <property type="term" value="P:negative regulation of hydrolase activity"/>
    <property type="evidence" value="ECO:0000250"/>
    <property type="project" value="UniProtKB"/>
</dbReference>
<dbReference type="GO" id="GO:1990443">
    <property type="term" value="P:peptidyl-threonine autophosphorylation"/>
    <property type="evidence" value="ECO:0000315"/>
    <property type="project" value="UniProtKB"/>
</dbReference>
<dbReference type="GO" id="GO:0051928">
    <property type="term" value="P:positive regulation of calcium ion transport"/>
    <property type="evidence" value="ECO:0000250"/>
    <property type="project" value="ParkinsonsUK-UCL"/>
</dbReference>
<dbReference type="GO" id="GO:0010666">
    <property type="term" value="P:positive regulation of cardiac muscle cell apoptotic process"/>
    <property type="evidence" value="ECO:0000250"/>
    <property type="project" value="ParkinsonsUK-UCL"/>
</dbReference>
<dbReference type="GO" id="GO:0051092">
    <property type="term" value="P:positive regulation of NF-kappaB transcription factor activity"/>
    <property type="evidence" value="ECO:0000315"/>
    <property type="project" value="UniProtKB"/>
</dbReference>
<dbReference type="GO" id="GO:0046427">
    <property type="term" value="P:positive regulation of receptor signaling pathway via JAK-STAT"/>
    <property type="evidence" value="ECO:0000314"/>
    <property type="project" value="UniProtKB"/>
</dbReference>
<dbReference type="GO" id="GO:0006468">
    <property type="term" value="P:protein phosphorylation"/>
    <property type="evidence" value="ECO:0000314"/>
    <property type="project" value="UniProtKB"/>
</dbReference>
<dbReference type="GO" id="GO:2000124">
    <property type="term" value="P:regulation of endocannabinoid signaling pathway"/>
    <property type="evidence" value="ECO:0000250"/>
    <property type="project" value="UniProtKB"/>
</dbReference>
<dbReference type="GO" id="GO:1902108">
    <property type="term" value="P:regulation of mitochondrial membrane permeability involved in apoptotic process"/>
    <property type="evidence" value="ECO:0000250"/>
    <property type="project" value="ParkinsonsUK-UCL"/>
</dbReference>
<dbReference type="GO" id="GO:2001222">
    <property type="term" value="P:regulation of neuron migration"/>
    <property type="evidence" value="ECO:0000315"/>
    <property type="project" value="UniProtKB"/>
</dbReference>
<dbReference type="GO" id="GO:0048168">
    <property type="term" value="P:regulation of neuronal synaptic plasticity"/>
    <property type="evidence" value="ECO:0000250"/>
    <property type="project" value="ParkinsonsUK-UCL"/>
</dbReference>
<dbReference type="GO" id="GO:0046928">
    <property type="term" value="P:regulation of neurotransmitter secretion"/>
    <property type="evidence" value="ECO:0000250"/>
    <property type="project" value="ParkinsonsUK-UCL"/>
</dbReference>
<dbReference type="GO" id="GO:1903076">
    <property type="term" value="P:regulation of protein localization to plasma membrane"/>
    <property type="evidence" value="ECO:0000318"/>
    <property type="project" value="GO_Central"/>
</dbReference>
<dbReference type="GO" id="GO:0002931">
    <property type="term" value="P:response to ischemia"/>
    <property type="evidence" value="ECO:0000250"/>
    <property type="project" value="ParkinsonsUK-UCL"/>
</dbReference>
<dbReference type="CDD" id="cd14086">
    <property type="entry name" value="STKc_CaMKII"/>
    <property type="match status" value="1"/>
</dbReference>
<dbReference type="FunFam" id="1.10.510.10:FF:000001">
    <property type="entry name" value="Calcium/calmodulin-dependent protein kinase type II subunit delta"/>
    <property type="match status" value="1"/>
</dbReference>
<dbReference type="FunFam" id="3.30.200.20:FF:000002">
    <property type="entry name" value="Calcium/calmodulin-dependent protein kinase type II subunit delta isoform 2"/>
    <property type="match status" value="1"/>
</dbReference>
<dbReference type="FunFam" id="3.10.450.50:FF:000001">
    <property type="entry name" value="calcium/calmodulin-dependent protein kinase type II subunit gamma isoform X1"/>
    <property type="match status" value="1"/>
</dbReference>
<dbReference type="Gene3D" id="3.10.450.50">
    <property type="match status" value="1"/>
</dbReference>
<dbReference type="Gene3D" id="6.10.140.620">
    <property type="match status" value="1"/>
</dbReference>
<dbReference type="Gene3D" id="3.30.200.20">
    <property type="entry name" value="Phosphorylase Kinase, domain 1"/>
    <property type="match status" value="1"/>
</dbReference>
<dbReference type="Gene3D" id="1.10.510.10">
    <property type="entry name" value="Transferase(Phosphotransferase) domain 1"/>
    <property type="match status" value="1"/>
</dbReference>
<dbReference type="InterPro" id="IPR013543">
    <property type="entry name" value="Ca/CaM-dep_prot_kinase-assoc"/>
</dbReference>
<dbReference type="InterPro" id="IPR011009">
    <property type="entry name" value="Kinase-like_dom_sf"/>
</dbReference>
<dbReference type="InterPro" id="IPR032710">
    <property type="entry name" value="NTF2-like_dom_sf"/>
</dbReference>
<dbReference type="InterPro" id="IPR000719">
    <property type="entry name" value="Prot_kinase_dom"/>
</dbReference>
<dbReference type="InterPro" id="IPR017441">
    <property type="entry name" value="Protein_kinase_ATP_BS"/>
</dbReference>
<dbReference type="InterPro" id="IPR008271">
    <property type="entry name" value="Ser/Thr_kinase_AS"/>
</dbReference>
<dbReference type="PANTHER" id="PTHR24347">
    <property type="entry name" value="SERINE/THREONINE-PROTEIN KINASE"/>
    <property type="match status" value="1"/>
</dbReference>
<dbReference type="Pfam" id="PF08332">
    <property type="entry name" value="CaMKII_AD"/>
    <property type="match status" value="1"/>
</dbReference>
<dbReference type="Pfam" id="PF00069">
    <property type="entry name" value="Pkinase"/>
    <property type="match status" value="1"/>
</dbReference>
<dbReference type="SMART" id="SM00220">
    <property type="entry name" value="S_TKc"/>
    <property type="match status" value="1"/>
</dbReference>
<dbReference type="SUPFAM" id="SSF54427">
    <property type="entry name" value="NTF2-like"/>
    <property type="match status" value="1"/>
</dbReference>
<dbReference type="SUPFAM" id="SSF56112">
    <property type="entry name" value="Protein kinase-like (PK-like)"/>
    <property type="match status" value="1"/>
</dbReference>
<dbReference type="PROSITE" id="PS00107">
    <property type="entry name" value="PROTEIN_KINASE_ATP"/>
    <property type="match status" value="1"/>
</dbReference>
<dbReference type="PROSITE" id="PS50011">
    <property type="entry name" value="PROTEIN_KINASE_DOM"/>
    <property type="match status" value="1"/>
</dbReference>
<dbReference type="PROSITE" id="PS00108">
    <property type="entry name" value="PROTEIN_KINASE_ST"/>
    <property type="match status" value="1"/>
</dbReference>
<sequence>MATITCTRFTEEYQLFEELGKGAFSVVRRCVKVLAGQEYAAKIINTKKLSARDHQKLEREARICRLLKHPNIVRLHDSISEEGHHYLIFDLVTGGELFEDIVAREYYSEADASHCIQQILEAVLHCHQMGVVHRDLKPENLLLASKLKGAAVKLADFGLAIEVEGEQQAWFGFAGTPGYLSPEVLRKDPYGKPVDLWACGVILYILLVGYPPFWDEDQHRLYQQIKAGAYDFPSPEWDTVTPEAKDLINKMLTINPSKRITAAEALKHPWISHRSTVASCMHRQETVDCLKKFNARRKLKGAILTTMLATRNFSGGKSGGNKKSDGVKESSESTNTTIEDEDTKVRKQEIIKVTEQLIEAISNGDFESYTKMCDPGMTAFEPEALGNLVEGLDFHRFYFENLWSRNSKPVHTTILNPHIHLMGDESACIAYIRITQYLDAGGIPRTAQSEETRVWHRRDGKWQIVHFHRSGAPSVLPH</sequence>
<reference key="1">
    <citation type="submission" date="1999-04" db="EMBL/GenBank/DDBJ databases">
        <title>Human calcium/calmodulin-dependent protein kinase II: cDNA cloning and gene analysis.</title>
        <authorList>
            <person name="Li G.Y."/>
            <person name="Cooper N.G.F."/>
        </authorList>
    </citation>
    <scope>NUCLEOTIDE SEQUENCE [MRNA] (ISOFORMS A AND B)</scope>
    <source>
        <tissue>Brain</tissue>
    </source>
</reference>
<reference key="2">
    <citation type="journal article" date="1999" name="DNA Res.">
        <title>Prediction of the coding sequences of unidentified human genes. XIII. The complete sequences of 100 new cDNA clones from brain which code for large proteins in vitro.</title>
        <authorList>
            <person name="Nagase T."/>
            <person name="Ishikawa K."/>
            <person name="Suyama M."/>
            <person name="Kikuno R."/>
            <person name="Hirosawa M."/>
            <person name="Miyajima N."/>
            <person name="Tanaka A."/>
            <person name="Kotani H."/>
            <person name="Nomura N."/>
            <person name="Ohara O."/>
        </authorList>
    </citation>
    <scope>NUCLEOTIDE SEQUENCE [LARGE SCALE MRNA]</scope>
    <source>
        <tissue>Brain</tissue>
    </source>
</reference>
<reference key="3">
    <citation type="journal article" date="2004" name="Nature">
        <title>The DNA sequence and comparative analysis of human chromosome 5.</title>
        <authorList>
            <person name="Schmutz J."/>
            <person name="Martin J."/>
            <person name="Terry A."/>
            <person name="Couronne O."/>
            <person name="Grimwood J."/>
            <person name="Lowry S."/>
            <person name="Gordon L.A."/>
            <person name="Scott D."/>
            <person name="Xie G."/>
            <person name="Huang W."/>
            <person name="Hellsten U."/>
            <person name="Tran-Gyamfi M."/>
            <person name="She X."/>
            <person name="Prabhakar S."/>
            <person name="Aerts A."/>
            <person name="Altherr M."/>
            <person name="Bajorek E."/>
            <person name="Black S."/>
            <person name="Branscomb E."/>
            <person name="Caoile C."/>
            <person name="Challacombe J.F."/>
            <person name="Chan Y.M."/>
            <person name="Denys M."/>
            <person name="Detter J.C."/>
            <person name="Escobar J."/>
            <person name="Flowers D."/>
            <person name="Fotopulos D."/>
            <person name="Glavina T."/>
            <person name="Gomez M."/>
            <person name="Gonzales E."/>
            <person name="Goodstein D."/>
            <person name="Grigoriev I."/>
            <person name="Groza M."/>
            <person name="Hammon N."/>
            <person name="Hawkins T."/>
            <person name="Haydu L."/>
            <person name="Israni S."/>
            <person name="Jett J."/>
            <person name="Kadner K."/>
            <person name="Kimball H."/>
            <person name="Kobayashi A."/>
            <person name="Lopez F."/>
            <person name="Lou Y."/>
            <person name="Martinez D."/>
            <person name="Medina C."/>
            <person name="Morgan J."/>
            <person name="Nandkeshwar R."/>
            <person name="Noonan J.P."/>
            <person name="Pitluck S."/>
            <person name="Pollard M."/>
            <person name="Predki P."/>
            <person name="Priest J."/>
            <person name="Ramirez L."/>
            <person name="Retterer J."/>
            <person name="Rodriguez A."/>
            <person name="Rogers S."/>
            <person name="Salamov A."/>
            <person name="Salazar A."/>
            <person name="Thayer N."/>
            <person name="Tice H."/>
            <person name="Tsai M."/>
            <person name="Ustaszewska A."/>
            <person name="Vo N."/>
            <person name="Wheeler J."/>
            <person name="Wu K."/>
            <person name="Yang J."/>
            <person name="Dickson M."/>
            <person name="Cheng J.-F."/>
            <person name="Eichler E.E."/>
            <person name="Olsen A."/>
            <person name="Pennacchio L.A."/>
            <person name="Rokhsar D.S."/>
            <person name="Richardson P."/>
            <person name="Lucas S.M."/>
            <person name="Myers R.M."/>
            <person name="Rubin E.M."/>
        </authorList>
    </citation>
    <scope>NUCLEOTIDE SEQUENCE [LARGE SCALE GENOMIC DNA]</scope>
</reference>
<reference key="4">
    <citation type="journal article" date="2002" name="Proc. Natl. Acad. Sci. U.S.A.">
        <title>Requirement of Ca2+ and CaMKII for Stat1 Ser-727 phosphorylation in response to IFN-gamma.</title>
        <authorList>
            <person name="Nair J.S."/>
            <person name="DaFonseca C.J."/>
            <person name="Tjernberg A."/>
            <person name="Sun W."/>
            <person name="Darnell J.E. Jr."/>
            <person name="Chait B.T."/>
            <person name="Zhang J.J."/>
        </authorList>
    </citation>
    <scope>FUNCTION</scope>
</reference>
<reference key="5">
    <citation type="journal article" date="2004" name="J. Biol. Chem.">
        <title>Comparative analyses of the three-dimensional structures and enzymatic properties of alpha, beta, gamma and delta isoforms of Ca2+-calmodulin-dependent protein kinase II.</title>
        <authorList>
            <person name="Gaertner T.R."/>
            <person name="Kolodziej S.J."/>
            <person name="Wang D."/>
            <person name="Kobayashi R."/>
            <person name="Koomen J.M."/>
            <person name="Stoops J.K."/>
            <person name="Waxham M.N."/>
        </authorList>
    </citation>
    <scope>FUNCTION</scope>
    <scope>ACTIVITY REGULATION</scope>
    <scope>SUBUNIT</scope>
    <scope>AUTOPHOSPHORYLATION</scope>
</reference>
<reference key="6">
    <citation type="journal article" date="2004" name="Neuron">
        <title>SynGAP-MUPP1-CaMKII synaptic complexes regulate p38 MAP kinase activity and NMDA receptor-dependent synaptic AMPA receptor potentiation.</title>
        <authorList>
            <person name="Krapivinsky G."/>
            <person name="Medina I."/>
            <person name="Krapivinsky L."/>
            <person name="Gapon S."/>
            <person name="Clapham D.E."/>
        </authorList>
    </citation>
    <scope>INTERACTION WITH MPDZ</scope>
</reference>
<reference key="7">
    <citation type="journal article" date="2013" name="Elife">
        <title>CAMKII and Calcineurin regulate the lifespan of Caenorhabditis elegans through the FOXO transcription factor DAF-16.</title>
        <authorList>
            <person name="Tao L."/>
            <person name="Xie Q."/>
            <person name="Ding Y.H."/>
            <person name="Li S.T."/>
            <person name="Peng S."/>
            <person name="Zhang Y.P."/>
            <person name="Tan D."/>
            <person name="Yuan Z."/>
            <person name="Dong M.Q."/>
        </authorList>
    </citation>
    <scope>FUNCTION</scope>
    <scope>CATALYTIC ACTIVITY</scope>
    <scope>COFACTOR</scope>
</reference>
<reference key="8">
    <citation type="journal article" date="2017" name="J. Neurosci.">
        <title>Mutation Disrupts Dendritic Morphology and Synaptic Transmission, and Causes ASD-Related Behaviors.</title>
        <authorList>
            <person name="Stephenson J.R."/>
            <person name="Wang X."/>
            <person name="Perfitt T.L."/>
            <person name="Parrish W.P."/>
            <person name="Shonesy B.C."/>
            <person name="Marks C.R."/>
            <person name="Mortlock D.P."/>
            <person name="Nakagawa T."/>
            <person name="Sutcliffe J.S."/>
            <person name="Colbran R.J."/>
        </authorList>
    </citation>
    <scope>FUNCTION</scope>
    <scope>INTERACTION WITH CACNB2; GRIN2B; GRM5; LRRC7 AND SHANK3</scope>
    <scope>SUBCELLULAR LOCATION</scope>
    <scope>CHARACTERIZATION OF VARIANT MRD53 VAL-183</scope>
</reference>
<reference key="9">
    <citation type="journal article" date="2015" name="Nature">
        <title>Large-scale discovery of novel genetic causes of developmental disorders.</title>
        <authorList>
            <consortium name="Deciphering Developmental Disorders Study"/>
        </authorList>
    </citation>
    <scope>VARIANT MRD53 ALA-138</scope>
</reference>
<reference key="10">
    <citation type="journal article" date="2017" name="Am. J. Hum. Genet.">
        <title>De Novo Mutations in Protein Kinase Genes CAMK2A and CAMK2B Cause Intellectual Disability.</title>
        <authorList>
            <consortium name="Undiagnosed Diseases Network"/>
            <consortium name="GEM HUGO"/>
            <consortium name="Deciphering Developmental Disorders Study"/>
            <person name="Kuery S."/>
            <person name="van Woerden G.M."/>
            <person name="Besnard T."/>
            <person name="Proietti Onori M."/>
            <person name="Latypova X."/>
            <person name="Towne M.C."/>
            <person name="Cho M.T."/>
            <person name="Prescott T.E."/>
            <person name="Ploeg M.A."/>
            <person name="Sanders S."/>
            <person name="Stessman H.A.F."/>
            <person name="Pujol A."/>
            <person name="Distel B."/>
            <person name="Robak L.A."/>
            <person name="Bernstein J.A."/>
            <person name="Denomme-Pichon A.S."/>
            <person name="Lesca G."/>
            <person name="Sellars E.A."/>
            <person name="Berg J."/>
            <person name="Carre W."/>
            <person name="Busk O.L."/>
            <person name="van Bon B.W.M."/>
            <person name="Waugh J.L."/>
            <person name="Deardorff M."/>
            <person name="Hoganson G.E."/>
            <person name="Bosanko K.B."/>
            <person name="Johnson D.S."/>
            <person name="Dabir T."/>
            <person name="Holla O.L."/>
            <person name="Sarkar A."/>
            <person name="Tveten K."/>
            <person name="de Bellescize J."/>
            <person name="Braathen G.J."/>
            <person name="Terhal P.A."/>
            <person name="Grange D.K."/>
            <person name="van Haeringen A."/>
            <person name="Lam C."/>
            <person name="Mirzaa G."/>
            <person name="Burton J."/>
            <person name="Bhoj E.J."/>
            <person name="Douglas J."/>
            <person name="Santani A.B."/>
            <person name="Nesbitt A.I."/>
            <person name="Helbig K.L."/>
            <person name="Andrews M.V."/>
            <person name="Begtrup A."/>
            <person name="Tang S."/>
            <person name="van Gassen K.L.I."/>
            <person name="Juusola J."/>
            <person name="Foss K."/>
            <person name="Enns G.M."/>
            <person name="Moog U."/>
            <person name="Hinderhofer K."/>
            <person name="Paramasivam N."/>
            <person name="Lincoln S."/>
            <person name="Kusako B.H."/>
            <person name="Lindenbaum P."/>
            <person name="Charpentier E."/>
            <person name="Nowak C.B."/>
            <person name="Cherot E."/>
            <person name="Simonet T."/>
            <person name="Ruivenkamp C.A.L."/>
            <person name="Hahn S."/>
            <person name="Brownstein C.A."/>
            <person name="Xia F."/>
            <person name="Schmitt S."/>
            <person name="Deb W."/>
            <person name="Bonneau D."/>
            <person name="Nizon M."/>
            <person name="Quinquis D."/>
            <person name="Chelly J."/>
            <person name="Rudolf G."/>
            <person name="Sanlaville D."/>
            <person name="Parent P."/>
            <person name="Gilbert-Dussardier B."/>
            <person name="Toutain A."/>
            <person name="Sutton V.R."/>
            <person name="Thies J."/>
            <person name="Peart-Vissers L.E.L.M."/>
            <person name="Boisseau P."/>
            <person name="Vincent M."/>
            <person name="Grabrucker A.M."/>
            <person name="Dubourg C."/>
            <person name="Tan W.H."/>
            <person name="Verbeek N.E."/>
            <person name="Granzow M."/>
            <person name="Santen G.W.E."/>
            <person name="Shendure J."/>
            <person name="Isidor B."/>
            <person name="Pasquier L."/>
            <person name="Redon R."/>
            <person name="Yang Y."/>
            <person name="State M.W."/>
            <person name="Kleefstra T."/>
            <person name="Cogne B."/>
            <person name="Petrovski S."/>
            <person name="Retterer K."/>
            <person name="Eichler E.E."/>
            <person name="Rosenfeld J.A."/>
            <person name="Agrawal P.B."/>
            <person name="Bezieau S."/>
            <person name="Odent S."/>
            <person name="Elgersma Y."/>
            <person name="Mercier S."/>
        </authorList>
    </citation>
    <scope>INVOLVEMENT IN MRD53</scope>
    <scope>VARIANTS MRD53 SER-98; ASP-109; VAL-112; VAL-183; LEU-212; LEU-235; ARG-282 AND PRO-286</scope>
    <scope>CHARACTERIZATION OF VARIANTS MRD53 ALA-98; ASP-109; ALA-138; VAL-183; LEU-212; LEU-235; ARG-282 AND PRO-286</scope>
    <scope>FUNCTION</scope>
    <scope>MUTAGENESIS OF LYS-42 AND THR-286</scope>
</reference>
<reference key="11">
    <citation type="journal article" date="2018" name="Ann. Clin. Transl. Neurol.">
        <title>De novo variants in CAMK2A and CAMK2B cause neurodevelopmental disorders.</title>
        <authorList>
            <person name="Akita T."/>
            <person name="Aoto K."/>
            <person name="Kato M."/>
            <person name="Shiina M."/>
            <person name="Mutoh H."/>
            <person name="Nakashima M."/>
            <person name="Kuki I."/>
            <person name="Okazaki S."/>
            <person name="Magara S."/>
            <person name="Shiihara T."/>
            <person name="Yokochi K."/>
            <person name="Aiba K."/>
            <person name="Tohyama J."/>
            <person name="Ohba C."/>
            <person name="Miyatake S."/>
            <person name="Miyake N."/>
            <person name="Ogata K."/>
            <person name="Fukuda A."/>
            <person name="Matsumoto N."/>
            <person name="Saitsu H."/>
        </authorList>
    </citation>
    <scope>INVOLVEMENT IN MRD53</scope>
    <scope>VARIANTS MRD53 GLN-212 AND LEU-235</scope>
    <scope>CHARACTERIZATION OF VARIANTS MRD53 GLN-212 AND LEU-235</scope>
</reference>
<reference key="12">
    <citation type="journal article" date="2018" name="Elife">
        <title>A homozygous loss-of-function CAMK2A mutation causes growth delay, frequent seizures and severe intellectual disability.</title>
        <authorList>
            <person name="Chia P.H."/>
            <person name="Zhong F.L."/>
            <person name="Niwa S."/>
            <person name="Bonnard C."/>
            <person name="Utami K.H."/>
            <person name="Zeng R."/>
            <person name="Lee H."/>
            <person name="Eskin A."/>
            <person name="Nelson S.F."/>
            <person name="Xie W.H."/>
            <person name="Al-Tawalbeh S."/>
            <person name="El-Khateeb M."/>
            <person name="Shboul M."/>
            <person name="Pouladi M.A."/>
            <person name="Al-Raqad M."/>
            <person name="Reversade B."/>
        </authorList>
    </citation>
    <scope>INVOLVEMENT IN MRT63</scope>
    <scope>SUBUNIT</scope>
    <scope>VARIANT MRT63 TYR-466</scope>
    <scope>CHARACTERIZATION OF VARIANT MRT63 TYR-466</scope>
    <scope>MUTAGENESIS OF 466-HIS--HIS-478</scope>
</reference>
<reference key="13">
    <citation type="journal article" date="2022" name="Cell">
        <title>A family of conserved bacterial virulence factors dampens interferon responses by blocking calcium signaling.</title>
        <authorList>
            <person name="Alphonse N."/>
            <person name="Wanford J.J."/>
            <person name="Voak A.A."/>
            <person name="Gay J."/>
            <person name="Venkhaya S."/>
            <person name="Burroughs O."/>
            <person name="Mathew S."/>
            <person name="Lee T."/>
            <person name="Evans S.L."/>
            <person name="Zhao W."/>
            <person name="Frowde K."/>
            <person name="Alrehaili A."/>
            <person name="Dickenson R.E."/>
            <person name="Munk M."/>
            <person name="Panina S."/>
            <person name="Mahmood I.F."/>
            <person name="Llorian M."/>
            <person name="Stanifer M.L."/>
            <person name="Boulant S."/>
            <person name="Berchtold M.W."/>
            <person name="Bergeron J.R.C."/>
            <person name="Wack A."/>
            <person name="Lesser C.F."/>
            <person name="Odendall C."/>
        </authorList>
    </citation>
    <scope>FUNCTION</scope>
</reference>
<keyword id="KW-0002">3D-structure</keyword>
<keyword id="KW-0025">Alternative splicing</keyword>
<keyword id="KW-0067">ATP-binding</keyword>
<keyword id="KW-0112">Calmodulin-binding</keyword>
<keyword id="KW-0966">Cell projection</keyword>
<keyword id="KW-0225">Disease variant</keyword>
<keyword id="KW-0991">Intellectual disability</keyword>
<keyword id="KW-0418">Kinase</keyword>
<keyword id="KW-0449">Lipoprotein</keyword>
<keyword id="KW-0460">Magnesium</keyword>
<keyword id="KW-0479">Metal-binding</keyword>
<keyword id="KW-0547">Nucleotide-binding</keyword>
<keyword id="KW-0564">Palmitate</keyword>
<keyword id="KW-0597">Phosphoprotein</keyword>
<keyword id="KW-1267">Proteomics identification</keyword>
<keyword id="KW-1185">Reference proteome</keyword>
<keyword id="KW-0723">Serine/threonine-protein kinase</keyword>
<keyword id="KW-0770">Synapse</keyword>
<keyword id="KW-0808">Transferase</keyword>
<gene>
    <name type="primary">CAMK2A</name>
    <name type="synonym">CAMKA</name>
    <name type="synonym">KIAA0968</name>
</gene>
<feature type="chain" id="PRO_0000086091" description="Calcium/calmodulin-dependent protein kinase type II subunit alpha">
    <location>
        <begin position="1"/>
        <end position="478"/>
    </location>
</feature>
<feature type="domain" description="Protein kinase" evidence="4">
    <location>
        <begin position="13"/>
        <end position="271"/>
    </location>
</feature>
<feature type="region of interest" description="Calmodulin-binding">
    <location>
        <begin position="290"/>
        <end position="300"/>
    </location>
</feature>
<feature type="region of interest" description="Interaction with BAALC" evidence="1">
    <location>
        <begin position="310"/>
        <end position="320"/>
    </location>
</feature>
<feature type="region of interest" description="Disordered" evidence="6">
    <location>
        <begin position="314"/>
        <end position="341"/>
    </location>
</feature>
<feature type="compositionally biased region" description="Basic and acidic residues" evidence="6">
    <location>
        <begin position="322"/>
        <end position="331"/>
    </location>
</feature>
<feature type="active site" description="Proton acceptor" evidence="4 5">
    <location>
        <position position="135"/>
    </location>
</feature>
<feature type="binding site" evidence="4">
    <location>
        <begin position="19"/>
        <end position="27"/>
    </location>
    <ligand>
        <name>ATP</name>
        <dbReference type="ChEBI" id="CHEBI:30616"/>
    </ligand>
</feature>
<feature type="binding site" evidence="4">
    <location>
        <position position="42"/>
    </location>
    <ligand>
        <name>ATP</name>
        <dbReference type="ChEBI" id="CHEBI:30616"/>
    </ligand>
</feature>
<feature type="modified residue" description="Phosphotyrosine" evidence="3">
    <location>
        <position position="13"/>
    </location>
</feature>
<feature type="modified residue" description="Phosphoserine" evidence="2">
    <location>
        <position position="257"/>
    </location>
</feature>
<feature type="modified residue" description="Phosphothreonine; by autocatalysis" evidence="2">
    <location>
        <position position="286"/>
    </location>
</feature>
<feature type="modified residue" description="Phosphoserine" evidence="3">
    <location>
        <position position="330"/>
    </location>
</feature>
<feature type="modified residue" description="Phosphoserine" evidence="3">
    <location>
        <position position="331"/>
    </location>
</feature>
<feature type="modified residue" description="Phosphoserine" evidence="3">
    <location>
        <position position="333"/>
    </location>
</feature>
<feature type="modified residue" description="Phosphothreonine" evidence="3">
    <location>
        <position position="336"/>
    </location>
</feature>
<feature type="modified residue" description="Phosphothreonine" evidence="3">
    <location>
        <position position="337"/>
    </location>
</feature>
<feature type="modified residue" description="Phosphoserine" evidence="3">
    <location>
        <position position="404"/>
    </location>
</feature>
<feature type="splice variant" id="VSP_004766" description="In isoform B." evidence="15">
    <original>K</original>
    <variation>KKRKSSSSVQLM</variation>
    <location>
        <position position="328"/>
    </location>
</feature>
<feature type="sequence variant" id="VAR_080579" description="In MRD53; no effect on protein abundance; decreased autophosphorylation; decreased neuronal migration; dbSNP:rs1554122526." evidence="12">
    <original>F</original>
    <variation>S</variation>
    <location>
        <position position="98"/>
    </location>
</feature>
<feature type="sequence variant" id="VAR_080580" description="In MRD53; no effect on protein abundance; increased autophosphorylation; decreased neuronal migration." evidence="12">
    <original>E</original>
    <variation>D</variation>
    <location>
        <position position="109"/>
    </location>
</feature>
<feature type="sequence variant" id="VAR_080581" description="In MRD53; uncertain significance." evidence="12">
    <original>A</original>
    <variation>V</variation>
    <location>
        <position position="112"/>
    </location>
</feature>
<feature type="sequence variant" id="VAR_080582" description="In MRD53; uncertain significance; no effect on protein abundance; no effect on autophosphorylation; no effect on neuronal migration." evidence="10 12">
    <original>P</original>
    <variation>A</variation>
    <location>
        <position position="138"/>
    </location>
</feature>
<feature type="sequence variant" id="VAR_080583" description="In MRD53; increased ubiquitin-mediated proteasomal degradation with a dominant negative effect on wild-type protein; decreased localization to dendritic spines; no effect on holoenzyme assembly; loss of interaction with SHANK3; loss of interaction with GRIN2B; loss of interaction with CACNB2; loss of interaction with LRRC7; loss of interaction with GRM5; decreased protein serine/threonine kinase activity with a dominant negative effect on wild-type protein; decreased autophosphorylation; changed dendritic spine development; decreased neuronal migration; dbSNP:rs1554122129." evidence="11 12">
    <original>E</original>
    <variation>V</variation>
    <location>
        <position position="183"/>
    </location>
</feature>
<feature type="sequence variant" id="VAR_080584" description="In MRD53; uncertain significance; no effect on protein abundance; no effect on autophosphorylation; no effect on neuronal migration; dbSNP:rs926027867." evidence="12">
    <original>P</original>
    <variation>L</variation>
    <location>
        <position position="212"/>
    </location>
</feature>
<feature type="sequence variant" id="VAR_081160" description="In MRD53; increased basal autophosphorylation." evidence="13">
    <original>P</original>
    <variation>Q</variation>
    <location>
        <position position="212"/>
    </location>
</feature>
<feature type="sequence variant" id="VAR_080585" description="In MRD53; uncertain significance; no effect on protein abundance; no effect on autophosphorylation; no effect on neuronal migration; dbSNP:rs864309606." evidence="12 13">
    <original>P</original>
    <variation>L</variation>
    <location>
        <position position="235"/>
    </location>
</feature>
<feature type="sequence variant" id="VAR_080586" description="In MRD53; decreased protein abundance; increased autophosphorylation; decreased neuronal migration; dbSNP:rs1554121875." evidence="12">
    <original>H</original>
    <variation>R</variation>
    <location>
        <position position="282"/>
    </location>
</feature>
<feature type="sequence variant" id="VAR_080587" description="In MRD53; no effect on protein abundance; loss of autophosphorylation; loss of neuronal migration; dbSNP:rs1554121872." evidence="12">
    <original>T</original>
    <variation>P</variation>
    <location>
        <position position="286"/>
    </location>
</feature>
<feature type="sequence variant" id="VAR_081161" description="In MRT63; decreased oligomerization; dbSNP:rs1554119274." evidence="14">
    <original>H</original>
    <variation>Y</variation>
    <location>
        <position position="466"/>
    </location>
</feature>
<feature type="mutagenesis site" description="No effect on protein stability or degradation. No effect on neuronal migration; when associated with P-286." evidence="12">
    <original>K</original>
    <variation>R</variation>
    <location>
        <position position="42"/>
    </location>
</feature>
<feature type="mutagenesis site" description="No effect on neuronal migration." evidence="12">
    <original>T</original>
    <variation>A</variation>
    <location>
        <position position="286"/>
    </location>
</feature>
<feature type="mutagenesis site" description="Loss of neuronal migration." evidence="12">
    <original>T</original>
    <variation>D</variation>
    <location>
        <position position="286"/>
    </location>
</feature>
<feature type="mutagenesis site" description="No effect on neuronal migration; when associated with R-42." evidence="12">
    <original>T</original>
    <variation>P</variation>
    <location>
        <position position="286"/>
    </location>
</feature>
<feature type="mutagenesis site" description="Loss of oligomerization." evidence="14">
    <location>
        <begin position="466"/>
        <end position="478"/>
    </location>
</feature>
<feature type="sequence conflict" description="In Ref. 1; AAD30558/AAD30559." evidence="16" ref="1">
    <original>D</original>
    <variation>G</variation>
    <location>
        <position position="365"/>
    </location>
</feature>
<feature type="helix" evidence="20">
    <location>
        <begin position="8"/>
        <end position="12"/>
    </location>
</feature>
<feature type="strand" evidence="20">
    <location>
        <begin position="13"/>
        <end position="21"/>
    </location>
</feature>
<feature type="strand" evidence="20">
    <location>
        <begin position="26"/>
        <end position="32"/>
    </location>
</feature>
<feature type="helix" evidence="20">
    <location>
        <begin position="33"/>
        <end position="35"/>
    </location>
</feature>
<feature type="strand" evidence="20">
    <location>
        <begin position="37"/>
        <end position="45"/>
    </location>
</feature>
<feature type="helix" evidence="20">
    <location>
        <begin position="46"/>
        <end position="48"/>
    </location>
</feature>
<feature type="helix" evidence="20">
    <location>
        <begin position="51"/>
        <end position="66"/>
    </location>
</feature>
<feature type="strand" evidence="20">
    <location>
        <begin position="75"/>
        <end position="81"/>
    </location>
</feature>
<feature type="strand" evidence="20">
    <location>
        <begin position="84"/>
        <end position="89"/>
    </location>
</feature>
<feature type="helix" evidence="20">
    <location>
        <begin position="97"/>
        <end position="104"/>
    </location>
</feature>
<feature type="helix" evidence="20">
    <location>
        <begin position="109"/>
        <end position="128"/>
    </location>
</feature>
<feature type="helix" evidence="20">
    <location>
        <begin position="138"/>
        <end position="140"/>
    </location>
</feature>
<feature type="strand" evidence="20">
    <location>
        <begin position="141"/>
        <end position="144"/>
    </location>
</feature>
<feature type="strand" evidence="20">
    <location>
        <begin position="152"/>
        <end position="154"/>
    </location>
</feature>
<feature type="helix" evidence="20">
    <location>
        <begin position="157"/>
        <end position="159"/>
    </location>
</feature>
<feature type="helix" evidence="20">
    <location>
        <begin position="177"/>
        <end position="179"/>
    </location>
</feature>
<feature type="helix" evidence="20">
    <location>
        <begin position="182"/>
        <end position="186"/>
    </location>
</feature>
<feature type="helix" evidence="20">
    <location>
        <begin position="193"/>
        <end position="208"/>
    </location>
</feature>
<feature type="helix" evidence="20">
    <location>
        <begin position="218"/>
        <end position="227"/>
    </location>
</feature>
<feature type="helix" evidence="20">
    <location>
        <begin position="236"/>
        <end position="239"/>
    </location>
</feature>
<feature type="helix" evidence="20">
    <location>
        <begin position="242"/>
        <end position="251"/>
    </location>
</feature>
<feature type="turn" evidence="20">
    <location>
        <begin position="256"/>
        <end position="258"/>
    </location>
</feature>
<feature type="helix" evidence="20">
    <location>
        <begin position="262"/>
        <end position="266"/>
    </location>
</feature>
<feature type="helix" evidence="20">
    <location>
        <begin position="269"/>
        <end position="272"/>
    </location>
</feature>
<feature type="helix" evidence="17">
    <location>
        <begin position="274"/>
        <end position="277"/>
    </location>
</feature>
<feature type="helix" evidence="17">
    <location>
        <begin position="284"/>
        <end position="298"/>
    </location>
</feature>
<feature type="helix" evidence="19">
    <location>
        <begin position="347"/>
        <end position="362"/>
    </location>
</feature>
<feature type="helix" evidence="19">
    <location>
        <begin position="366"/>
        <end position="372"/>
    </location>
</feature>
<feature type="strand" evidence="19">
    <location>
        <begin position="373"/>
        <end position="380"/>
    </location>
</feature>
<feature type="helix" evidence="19">
    <location>
        <begin position="382"/>
        <end position="384"/>
    </location>
</feature>
<feature type="strand" evidence="19">
    <location>
        <begin position="388"/>
        <end position="392"/>
    </location>
</feature>
<feature type="helix" evidence="19">
    <location>
        <begin position="393"/>
        <end position="401"/>
    </location>
</feature>
<feature type="turn" evidence="19">
    <location>
        <begin position="402"/>
        <end position="406"/>
    </location>
</feature>
<feature type="strand" evidence="19">
    <location>
        <begin position="410"/>
        <end position="422"/>
    </location>
</feature>
<feature type="turn" evidence="19">
    <location>
        <begin position="423"/>
        <end position="425"/>
    </location>
</feature>
<feature type="strand" evidence="19">
    <location>
        <begin position="426"/>
        <end position="438"/>
    </location>
</feature>
<feature type="strand" evidence="18">
    <location>
        <begin position="440"/>
        <end position="442"/>
    </location>
</feature>
<feature type="strand" evidence="19">
    <location>
        <begin position="444"/>
        <end position="458"/>
    </location>
</feature>
<feature type="strand" evidence="19">
    <location>
        <begin position="461"/>
        <end position="471"/>
    </location>
</feature>